<name>UBIG_PSEE4</name>
<gene>
    <name evidence="1" type="primary">ubiG</name>
    <name type="ordered locus">PSEEN1484</name>
</gene>
<sequence length="232" mass="26052">MSNVDHAEIAKFEALAHRWWDRESEFKPLHDINPLRVNWIDERVSLAGKKVLDVGCGGGILSEAMAQRGATVTGIDMGEAPLAVAQLHQLESGVDVEYRQITAEALAEEMPEQFDVVTCLEMLEHVPDPSSVIRACYRMVKPGGQVFFSTINRNPKAYLLAIIGAEYILKMLPRGTHDFKKFIRPSELGAWSRVAGLEVKDIIGLTYNPLTKHYKLSNDVDVNYMIQTLREE</sequence>
<evidence type="ECO:0000255" key="1">
    <source>
        <dbReference type="HAMAP-Rule" id="MF_00472"/>
    </source>
</evidence>
<protein>
    <recommendedName>
        <fullName evidence="1">Ubiquinone biosynthesis O-methyltransferase</fullName>
    </recommendedName>
    <alternativeName>
        <fullName evidence="1">2-polyprenyl-6-hydroxyphenol methylase</fullName>
        <ecNumber evidence="1">2.1.1.222</ecNumber>
    </alternativeName>
    <alternativeName>
        <fullName evidence="1">3-demethylubiquinone 3-O-methyltransferase</fullName>
        <ecNumber evidence="1">2.1.1.64</ecNumber>
    </alternativeName>
</protein>
<comment type="function">
    <text evidence="1">O-methyltransferase that catalyzes the 2 O-methylation steps in the ubiquinone biosynthetic pathway.</text>
</comment>
<comment type="catalytic activity">
    <reaction evidence="1">
        <text>a 3-demethylubiquinol + S-adenosyl-L-methionine = a ubiquinol + S-adenosyl-L-homocysteine + H(+)</text>
        <dbReference type="Rhea" id="RHEA:44380"/>
        <dbReference type="Rhea" id="RHEA-COMP:9566"/>
        <dbReference type="Rhea" id="RHEA-COMP:10914"/>
        <dbReference type="ChEBI" id="CHEBI:15378"/>
        <dbReference type="ChEBI" id="CHEBI:17976"/>
        <dbReference type="ChEBI" id="CHEBI:57856"/>
        <dbReference type="ChEBI" id="CHEBI:59789"/>
        <dbReference type="ChEBI" id="CHEBI:84422"/>
        <dbReference type="EC" id="2.1.1.64"/>
    </reaction>
</comment>
<comment type="catalytic activity">
    <reaction evidence="1">
        <text>a 3-(all-trans-polyprenyl)benzene-1,2-diol + S-adenosyl-L-methionine = a 2-methoxy-6-(all-trans-polyprenyl)phenol + S-adenosyl-L-homocysteine + H(+)</text>
        <dbReference type="Rhea" id="RHEA:31411"/>
        <dbReference type="Rhea" id="RHEA-COMP:9550"/>
        <dbReference type="Rhea" id="RHEA-COMP:9551"/>
        <dbReference type="ChEBI" id="CHEBI:15378"/>
        <dbReference type="ChEBI" id="CHEBI:57856"/>
        <dbReference type="ChEBI" id="CHEBI:59789"/>
        <dbReference type="ChEBI" id="CHEBI:62729"/>
        <dbReference type="ChEBI" id="CHEBI:62731"/>
        <dbReference type="EC" id="2.1.1.222"/>
    </reaction>
</comment>
<comment type="pathway">
    <text evidence="1">Cofactor biosynthesis; ubiquinone biosynthesis.</text>
</comment>
<comment type="similarity">
    <text evidence="1">Belongs to the methyltransferase superfamily. UbiG/COQ3 family.</text>
</comment>
<dbReference type="EC" id="2.1.1.222" evidence="1"/>
<dbReference type="EC" id="2.1.1.64" evidence="1"/>
<dbReference type="EMBL" id="CT573326">
    <property type="protein sequence ID" value="CAK14353.1"/>
    <property type="molecule type" value="Genomic_DNA"/>
</dbReference>
<dbReference type="RefSeq" id="WP_011532768.1">
    <property type="nucleotide sequence ID" value="NC_008027.1"/>
</dbReference>
<dbReference type="SMR" id="Q1IDA6"/>
<dbReference type="STRING" id="384676.PSEEN1484"/>
<dbReference type="GeneID" id="32804736"/>
<dbReference type="KEGG" id="pen:PSEEN1484"/>
<dbReference type="eggNOG" id="COG2227">
    <property type="taxonomic scope" value="Bacteria"/>
</dbReference>
<dbReference type="HOGENOM" id="CLU_042432_5_0_6"/>
<dbReference type="OrthoDB" id="9801538at2"/>
<dbReference type="UniPathway" id="UPA00232"/>
<dbReference type="Proteomes" id="UP000000658">
    <property type="component" value="Chromosome"/>
</dbReference>
<dbReference type="GO" id="GO:0102208">
    <property type="term" value="F:2-polyprenyl-6-hydroxyphenol methylase activity"/>
    <property type="evidence" value="ECO:0007669"/>
    <property type="project" value="UniProtKB-EC"/>
</dbReference>
<dbReference type="GO" id="GO:0061542">
    <property type="term" value="F:3-demethylubiquinol 3-O-methyltransferase activity"/>
    <property type="evidence" value="ECO:0007669"/>
    <property type="project" value="UniProtKB-UniRule"/>
</dbReference>
<dbReference type="GO" id="GO:0010420">
    <property type="term" value="F:polyprenyldihydroxybenzoate methyltransferase activity"/>
    <property type="evidence" value="ECO:0007669"/>
    <property type="project" value="InterPro"/>
</dbReference>
<dbReference type="GO" id="GO:0032259">
    <property type="term" value="P:methylation"/>
    <property type="evidence" value="ECO:0007669"/>
    <property type="project" value="UniProtKB-KW"/>
</dbReference>
<dbReference type="CDD" id="cd02440">
    <property type="entry name" value="AdoMet_MTases"/>
    <property type="match status" value="1"/>
</dbReference>
<dbReference type="FunFam" id="3.40.50.150:FF:000028">
    <property type="entry name" value="Ubiquinone biosynthesis O-methyltransferase"/>
    <property type="match status" value="1"/>
</dbReference>
<dbReference type="Gene3D" id="3.40.50.150">
    <property type="entry name" value="Vaccinia Virus protein VP39"/>
    <property type="match status" value="1"/>
</dbReference>
<dbReference type="HAMAP" id="MF_00472">
    <property type="entry name" value="UbiG"/>
    <property type="match status" value="1"/>
</dbReference>
<dbReference type="InterPro" id="IPR029063">
    <property type="entry name" value="SAM-dependent_MTases_sf"/>
</dbReference>
<dbReference type="InterPro" id="IPR010233">
    <property type="entry name" value="UbiG_MeTrfase"/>
</dbReference>
<dbReference type="NCBIfam" id="TIGR01983">
    <property type="entry name" value="UbiG"/>
    <property type="match status" value="1"/>
</dbReference>
<dbReference type="PANTHER" id="PTHR43464">
    <property type="entry name" value="METHYLTRANSFERASE"/>
    <property type="match status" value="1"/>
</dbReference>
<dbReference type="PANTHER" id="PTHR43464:SF19">
    <property type="entry name" value="UBIQUINONE BIOSYNTHESIS O-METHYLTRANSFERASE, MITOCHONDRIAL"/>
    <property type="match status" value="1"/>
</dbReference>
<dbReference type="Pfam" id="PF13489">
    <property type="entry name" value="Methyltransf_23"/>
    <property type="match status" value="1"/>
</dbReference>
<dbReference type="SUPFAM" id="SSF53335">
    <property type="entry name" value="S-adenosyl-L-methionine-dependent methyltransferases"/>
    <property type="match status" value="1"/>
</dbReference>
<accession>Q1IDA6</accession>
<keyword id="KW-0489">Methyltransferase</keyword>
<keyword id="KW-0949">S-adenosyl-L-methionine</keyword>
<keyword id="KW-0808">Transferase</keyword>
<keyword id="KW-0831">Ubiquinone biosynthesis</keyword>
<reference key="1">
    <citation type="journal article" date="2006" name="Nat. Biotechnol.">
        <title>Complete genome sequence of the entomopathogenic and metabolically versatile soil bacterium Pseudomonas entomophila.</title>
        <authorList>
            <person name="Vodovar N."/>
            <person name="Vallenet D."/>
            <person name="Cruveiller S."/>
            <person name="Rouy Z."/>
            <person name="Barbe V."/>
            <person name="Acosta C."/>
            <person name="Cattolico L."/>
            <person name="Jubin C."/>
            <person name="Lajus A."/>
            <person name="Segurens B."/>
            <person name="Vacherie B."/>
            <person name="Wincker P."/>
            <person name="Weissenbach J."/>
            <person name="Lemaitre B."/>
            <person name="Medigue C."/>
            <person name="Boccard F."/>
        </authorList>
    </citation>
    <scope>NUCLEOTIDE SEQUENCE [LARGE SCALE GENOMIC DNA]</scope>
    <source>
        <strain>L48</strain>
    </source>
</reference>
<organism>
    <name type="scientific">Pseudomonas entomophila (strain L48)</name>
    <dbReference type="NCBI Taxonomy" id="384676"/>
    <lineage>
        <taxon>Bacteria</taxon>
        <taxon>Pseudomonadati</taxon>
        <taxon>Pseudomonadota</taxon>
        <taxon>Gammaproteobacteria</taxon>
        <taxon>Pseudomonadales</taxon>
        <taxon>Pseudomonadaceae</taxon>
        <taxon>Pseudomonas</taxon>
    </lineage>
</organism>
<proteinExistence type="inferred from homology"/>
<feature type="chain" id="PRO_1000013908" description="Ubiquinone biosynthesis O-methyltransferase">
    <location>
        <begin position="1"/>
        <end position="232"/>
    </location>
</feature>
<feature type="binding site" evidence="1">
    <location>
        <position position="36"/>
    </location>
    <ligand>
        <name>S-adenosyl-L-methionine</name>
        <dbReference type="ChEBI" id="CHEBI:59789"/>
    </ligand>
</feature>
<feature type="binding site" evidence="1">
    <location>
        <position position="55"/>
    </location>
    <ligand>
        <name>S-adenosyl-L-methionine</name>
        <dbReference type="ChEBI" id="CHEBI:59789"/>
    </ligand>
</feature>
<feature type="binding site" evidence="1">
    <location>
        <position position="76"/>
    </location>
    <ligand>
        <name>S-adenosyl-L-methionine</name>
        <dbReference type="ChEBI" id="CHEBI:59789"/>
    </ligand>
</feature>
<feature type="binding site" evidence="1">
    <location>
        <position position="120"/>
    </location>
    <ligand>
        <name>S-adenosyl-L-methionine</name>
        <dbReference type="ChEBI" id="CHEBI:59789"/>
    </ligand>
</feature>